<evidence type="ECO:0000250" key="1">
    <source>
        <dbReference type="UniProtKB" id="P04798"/>
    </source>
</evidence>
<evidence type="ECO:0000255" key="2"/>
<evidence type="ECO:0000255" key="3">
    <source>
        <dbReference type="PROSITE-ProRule" id="PRU00498"/>
    </source>
</evidence>
<evidence type="ECO:0000269" key="4">
    <source>
    </source>
</evidence>
<evidence type="ECO:0000269" key="5">
    <source>
    </source>
</evidence>
<evidence type="ECO:0000269" key="6">
    <source>
    </source>
</evidence>
<evidence type="ECO:0000269" key="7">
    <source>
    </source>
</evidence>
<evidence type="ECO:0000269" key="8">
    <source>
    </source>
</evidence>
<evidence type="ECO:0000269" key="9">
    <source>
    </source>
</evidence>
<evidence type="ECO:0000269" key="10">
    <source>
    </source>
</evidence>
<evidence type="ECO:0000303" key="11">
    <source>
    </source>
</evidence>
<evidence type="ECO:0000303" key="12">
    <source>
    </source>
</evidence>
<evidence type="ECO:0000303" key="13">
    <source>
    </source>
</evidence>
<evidence type="ECO:0000305" key="14"/>
<evidence type="ECO:0000312" key="15">
    <source>
        <dbReference type="EMBL" id="AAQ16576.1"/>
    </source>
</evidence>
<comment type="function">
    <text evidence="4 5 6 7 8 9 10">Cytochrome P450 monooxygenase; part of the gene cluster that mediates the biosynthesis of botrydial (PubMed:14651630, PubMed:15986930). Botrydial is necessary for colonization of plant tissue by the T4 strain (PubMed:19035644). It is a strain-dependent virulence factor since highly aggressive strains like SAS56 or B05 still retain substantial virulence when botrydial synthesis is impaired, since they produce also botcinic acid (PubMed:15986930). The first step of botrydial biosynthesis is performed by the sesquiterpene synthase BOT2 which catalyzes the cyclization of farnesyl diphosphate (FPP) to presilphiperfolan-8-beta-ol (PSP) (PubMed:19035644, PubMed:19476353). The cytochrome P450 monooxygenase BOT4 then catalyzes the hydroxylation at C-4 to give a probotryane intermediate (PubMed:27529428, PubMed:28617493). Acetylation of the hydroxyl at C-4 is carried out by the acetyltransferase BOT5, followed by the combined action of the P450 monooxygenases BOT3 and BOT1, to yield finally the glycol, via the regio- and stereospecific hydroxylations at C-10 and C-15 of the probotryane intermediates, respectively (PubMed:15986930, PubMed:27529428). The cleavage of the C10-C15 bond of probotryane skeleton is an intriguing and chemically important reaction, which could be mediated by some of the monooxygenases or by a combination of them (PubMed:27529428). It is possible that either BOT3 or BOT1 would oxidize either the 10- or the 15-hydroxy group to the hydroperoxide derivative, which would then undergo heterolytic fragmentation to give the dialdehyde botrydial (PubMed:27529428). Finally, the dehydrogenase BOT7 might be involved in the conversion of botrydial to dihydrobotrydial (PubMed:27721016).</text>
</comment>
<comment type="cofactor">
    <cofactor evidence="1">
        <name>heme</name>
        <dbReference type="ChEBI" id="CHEBI:30413"/>
    </cofactor>
</comment>
<comment type="pathway">
    <text evidence="5">Secondary metabolite biosynthesis.</text>
</comment>
<comment type="subcellular location">
    <subcellularLocation>
        <location evidence="2">Membrane</location>
        <topology evidence="2">Single-pass membrane protein</topology>
    </subcellularLocation>
</comment>
<comment type="induction">
    <text evidence="4 6 9">The botrydial biosynthesis cluster genes are co-regulated by the Ca(2+)/calcineurin signal transduction pathway, which is under the control of the alpha subunit BCG1 of a heterotrimeric G protein (PubMed:14651630, PubMed:19035644). Expression of the cluster is also positively regulated by the cluster-specific transcription factor BOT6 (PubMed:27721016).</text>
</comment>
<comment type="disruption phenotype">
    <text evidence="5">Abolishes the production of 10-beta,15-alpha-dihydroxyprobotryane, botrydial, and of some of its relatives (PubMed:15986930).</text>
</comment>
<comment type="similarity">
    <text evidence="14">Belongs to the cytochrome P450 family.</text>
</comment>
<dbReference type="EC" id="1.-.-.-" evidence="5"/>
<dbReference type="EMBL" id="AY277723">
    <property type="protein sequence ID" value="AAQ16576.1"/>
    <property type="molecule type" value="Genomic_DNA"/>
</dbReference>
<dbReference type="SMR" id="Q6WP49"/>
<dbReference type="GlyCosmos" id="Q6WP49">
    <property type="glycosylation" value="1 site, No reported glycans"/>
</dbReference>
<dbReference type="PHI-base" id="PHI:438"/>
<dbReference type="GO" id="GO:0016020">
    <property type="term" value="C:membrane"/>
    <property type="evidence" value="ECO:0007669"/>
    <property type="project" value="UniProtKB-SubCell"/>
</dbReference>
<dbReference type="GO" id="GO:0020037">
    <property type="term" value="F:heme binding"/>
    <property type="evidence" value="ECO:0007669"/>
    <property type="project" value="InterPro"/>
</dbReference>
<dbReference type="GO" id="GO:0005506">
    <property type="term" value="F:iron ion binding"/>
    <property type="evidence" value="ECO:0007669"/>
    <property type="project" value="InterPro"/>
</dbReference>
<dbReference type="GO" id="GO:0004497">
    <property type="term" value="F:monooxygenase activity"/>
    <property type="evidence" value="ECO:0007669"/>
    <property type="project" value="UniProtKB-KW"/>
</dbReference>
<dbReference type="GO" id="GO:0016705">
    <property type="term" value="F:oxidoreductase activity, acting on paired donors, with incorporation or reduction of molecular oxygen"/>
    <property type="evidence" value="ECO:0007669"/>
    <property type="project" value="InterPro"/>
</dbReference>
<dbReference type="CDD" id="cd11062">
    <property type="entry name" value="CYP58-like"/>
    <property type="match status" value="1"/>
</dbReference>
<dbReference type="Gene3D" id="1.10.630.10">
    <property type="entry name" value="Cytochrome P450"/>
    <property type="match status" value="1"/>
</dbReference>
<dbReference type="InterPro" id="IPR001128">
    <property type="entry name" value="Cyt_P450"/>
</dbReference>
<dbReference type="InterPro" id="IPR017972">
    <property type="entry name" value="Cyt_P450_CS"/>
</dbReference>
<dbReference type="InterPro" id="IPR002401">
    <property type="entry name" value="Cyt_P450_E_grp-I"/>
</dbReference>
<dbReference type="InterPro" id="IPR036396">
    <property type="entry name" value="Cyt_P450_sf"/>
</dbReference>
<dbReference type="InterPro" id="IPR050121">
    <property type="entry name" value="Cytochrome_P450_monoxygenase"/>
</dbReference>
<dbReference type="PANTHER" id="PTHR24305">
    <property type="entry name" value="CYTOCHROME P450"/>
    <property type="match status" value="1"/>
</dbReference>
<dbReference type="PANTHER" id="PTHR24305:SF152">
    <property type="entry name" value="P450, PUTATIVE (EUROFUNG)-RELATED"/>
    <property type="match status" value="1"/>
</dbReference>
<dbReference type="Pfam" id="PF00067">
    <property type="entry name" value="p450"/>
    <property type="match status" value="1"/>
</dbReference>
<dbReference type="PRINTS" id="PR00463">
    <property type="entry name" value="EP450I"/>
</dbReference>
<dbReference type="PRINTS" id="PR00385">
    <property type="entry name" value="P450"/>
</dbReference>
<dbReference type="SUPFAM" id="SSF48264">
    <property type="entry name" value="Cytochrome P450"/>
    <property type="match status" value="1"/>
</dbReference>
<dbReference type="PROSITE" id="PS00086">
    <property type="entry name" value="CYTOCHROME_P450"/>
    <property type="match status" value="1"/>
</dbReference>
<feature type="chain" id="PRO_0000444642" description="Cytochrome P450 monooxygenase BOT1">
    <location>
        <begin position="1"/>
        <end position="510"/>
    </location>
</feature>
<feature type="transmembrane region" description="Helical" evidence="2">
    <location>
        <begin position="16"/>
        <end position="36"/>
    </location>
</feature>
<feature type="binding site" description="axial binding residue" evidence="1">
    <location>
        <position position="454"/>
    </location>
    <ligand>
        <name>heme</name>
        <dbReference type="ChEBI" id="CHEBI:30413"/>
    </ligand>
    <ligandPart>
        <name>Fe</name>
        <dbReference type="ChEBI" id="CHEBI:18248"/>
    </ligandPart>
</feature>
<feature type="glycosylation site" description="N-linked (GlcNAc...) asparagine" evidence="3">
    <location>
        <position position="476"/>
    </location>
</feature>
<proteinExistence type="evidence at protein level"/>
<reference key="1">
    <citation type="journal article" date="2003" name="Mol. Microbiol.">
        <title>Cyclophilin A and calcineurin functions investigated by gene inactivation, cyclosporin A inhibition and cDNA arrays approaches in the phytopathogenic fungus Botrytis cinerea.</title>
        <authorList>
            <person name="Viaud M."/>
            <person name="Brunet-Simon A."/>
            <person name="Brygoo Y."/>
            <person name="Pradier J.-M."/>
            <person name="Levis C."/>
        </authorList>
    </citation>
    <scope>NUCLEOTIDE SEQUENCE [GENOMIC DNA]</scope>
    <scope>INDUCTION</scope>
    <source>
        <strain>T4</strain>
    </source>
</reference>
<reference key="2">
    <citation type="journal article" date="2005" name="Mol. Plant Microbe Interact.">
        <title>Functional analysis of the cytochrome P450 monooxygenase gene bcbot1 of Botrytis cinerea indicates that botrydial is a strain-specific virulence factor.</title>
        <authorList>
            <person name="Siewers V."/>
            <person name="Viaud M."/>
            <person name="Jimenez-Teja D."/>
            <person name="Collado I.G."/>
            <person name="Gronover C.S."/>
            <person name="Pradier J.M."/>
            <person name="Tudzynski B."/>
            <person name="Tudzynski P."/>
        </authorList>
    </citation>
    <scope>FUNCTION</scope>
    <scope>DISRUPTION PHENOTYPE</scope>
    <scope>CATALYTIC ACTIVITY</scope>
    <scope>PATHWAY</scope>
</reference>
<reference key="3">
    <citation type="journal article" date="2008" name="ACS Chem. Biol.">
        <title>Sesquiterpene synthase from the botrydial biosynthetic gene cluster of the phytopathogen Botrytis cinerea.</title>
        <authorList>
            <person name="Pinedo C."/>
            <person name="Wang C.M."/>
            <person name="Pradier J.M."/>
            <person name="Dalmais B."/>
            <person name="Choquer M."/>
            <person name="Le Pecheur P."/>
            <person name="Morgant G."/>
            <person name="Collado I.G."/>
            <person name="Cane D.E."/>
            <person name="Viaud M."/>
        </authorList>
    </citation>
    <scope>FUNCTION</scope>
    <scope>INDUCTION</scope>
</reference>
<reference key="4">
    <citation type="journal article" date="2009" name="J. Am. Chem. Soc.">
        <title>Biosynthesis of the sesquiterpene botrydial in Botrytis cinerea. Mechanism and stereochemistry of the enzymatic formation of presilphiperfolan-8beta-ol.</title>
        <authorList>
            <person name="Wang C.M."/>
            <person name="Hopsn R."/>
            <person name="Lin X."/>
            <person name="Cane D.E."/>
        </authorList>
    </citation>
    <scope>FUNCTION</scope>
</reference>
<reference key="5">
    <citation type="journal article" date="2016" name="ACS Chem. Biol.">
        <title>Genetic and molecular basis of botrydial biosynthesis: connecting cytochrome P450-encoding genes to biosynthetic intermediates.</title>
        <authorList>
            <person name="Moraga J."/>
            <person name="Dalmais B."/>
            <person name="Izquierdo-Bueno I."/>
            <person name="Aleu J."/>
            <person name="Hanson J.R."/>
            <person name="Hernandez-Galan R."/>
            <person name="Viaud M."/>
            <person name="Collado I.G."/>
        </authorList>
    </citation>
    <scope>FUNCTION</scope>
</reference>
<reference key="6">
    <citation type="journal article" date="2016" name="Fungal Genet. Biol.">
        <title>The botrydial biosynthetic gene cluster of Botrytis cinerea displays a bipartite genomic structure and is positively regulated by the putative Zn(II)2Cys6 transcription factor BcBot6.</title>
        <authorList>
            <person name="Porquier A."/>
            <person name="Morgant G."/>
            <person name="Moraga J."/>
            <person name="Dalmais B."/>
            <person name="Luyten I."/>
            <person name="Simon A."/>
            <person name="Pradier J.M."/>
            <person name="Amselem J."/>
            <person name="Collado I.G."/>
            <person name="Viaud M."/>
        </authorList>
    </citation>
    <scope>FUNCTION</scope>
    <scope>INDUCTION</scope>
</reference>
<reference key="7">
    <citation type="journal article" date="2017" name="Org. Biomol. Chem.">
        <title>The formation of sesquiterpenoid presilphiperfolane and cameroonane metabolites in the Bcbot4 null mutant of Botrytis cinerea.</title>
        <authorList>
            <person name="Franco Dos Santos G."/>
            <person name="Moraga J."/>
            <person name="Takahashi J.A."/>
            <person name="Viaud M."/>
            <person name="Hanson J.R."/>
            <person name="Hernandez Galan R."/>
            <person name="Collado I.G."/>
        </authorList>
    </citation>
    <scope>FUNCTION</scope>
</reference>
<name>BOT1_BOTFU</name>
<organism evidence="15">
    <name type="scientific">Botryotinia fuckeliana</name>
    <name type="common">Noble rot fungus</name>
    <name type="synonym">Botrytis cinerea</name>
    <dbReference type="NCBI Taxonomy" id="40559"/>
    <lineage>
        <taxon>Eukaryota</taxon>
        <taxon>Fungi</taxon>
        <taxon>Dikarya</taxon>
        <taxon>Ascomycota</taxon>
        <taxon>Pezizomycotina</taxon>
        <taxon>Leotiomycetes</taxon>
        <taxon>Helotiales</taxon>
        <taxon>Sclerotiniaceae</taxon>
        <taxon>Botrytis</taxon>
    </lineage>
</organism>
<gene>
    <name evidence="13" type="primary">BOT1</name>
    <name evidence="11" type="synonym">CND5</name>
    <name evidence="12" type="synonym">P450-12</name>
</gene>
<protein>
    <recommendedName>
        <fullName evidence="13">Cytochrome P450 monooxygenase BOT1</fullName>
        <ecNumber evidence="5">1.-.-.-</ecNumber>
    </recommendedName>
    <alternativeName>
        <fullName evidence="13">Botrydial biosynthesis cluster protein 1</fullName>
    </alternativeName>
    <alternativeName>
        <fullName evidence="11">Calcineurin-dependent protein 5</fullName>
    </alternativeName>
</protein>
<keyword id="KW-0325">Glycoprotein</keyword>
<keyword id="KW-0349">Heme</keyword>
<keyword id="KW-0408">Iron</keyword>
<keyword id="KW-0472">Membrane</keyword>
<keyword id="KW-0479">Metal-binding</keyword>
<keyword id="KW-0503">Monooxygenase</keyword>
<keyword id="KW-0560">Oxidoreductase</keyword>
<keyword id="KW-0812">Transmembrane</keyword>
<keyword id="KW-1133">Transmembrane helix</keyword>
<keyword id="KW-0843">Virulence</keyword>
<sequence length="510" mass="58162">MGLLSDVINNFLPETPLAWAALILASFTLYSVQLVVRRLYFHPLSKIPGPFLARSRYWYEFYQDIILGGIYVKNYAALHEKYGPVLRASPDRVHVSDPDFFHEVYSSGSKYMKDPAFFQAAGGIPEALPAIVDVEYHRRRRKLINDLFSAKSMEALSHLVLKVVQNALSKAHEHHEANKVLDIQRLYTGITIDTIMQVLCDRTLNFIDAKEEEEPPFLATLRTFSENFFLLKHFPILIWMALNIPKSIAQKLIPGEFEFRASINQWIRDRASEHELGVEKAEDGRKTVIDLLLRPEDGGRPLTHQAVEDETYSFAFAGTHTTSHTMSMGTYYLLSHPAKLQKLRDELKPIPKNDQGLYEYKTVRSLPYLNACIKESLRMSSPVPGILPRLVPAEGMTWRGHYLPPGTSVSSSIYSVHTDPNIFPNPEQFIPERWLANENLDHYLVVFGKGSRACIGLNVAWMETYLTFSNFFTSLNMTLFETNEQSTDWTDCGNAMIKKHVRVKVDSLAS</sequence>
<accession>Q6WP49</accession>